<reference key="1">
    <citation type="journal article" date="2003" name="Appl. Microbiol. Biotechnol.">
        <title>The Corynebacterium glutamicum genome: features and impacts on biotechnological processes.</title>
        <authorList>
            <person name="Ikeda M."/>
            <person name="Nakagawa S."/>
        </authorList>
    </citation>
    <scope>NUCLEOTIDE SEQUENCE [LARGE SCALE GENOMIC DNA]</scope>
    <source>
        <strain>ATCC 13032 / DSM 20300 / JCM 1318 / BCRC 11384 / CCUG 27702 / LMG 3730 / NBRC 12168 / NCIMB 10025 / NRRL B-2784 / 534</strain>
    </source>
</reference>
<reference key="2">
    <citation type="journal article" date="2003" name="J. Biotechnol.">
        <title>The complete Corynebacterium glutamicum ATCC 13032 genome sequence and its impact on the production of L-aspartate-derived amino acids and vitamins.</title>
        <authorList>
            <person name="Kalinowski J."/>
            <person name="Bathe B."/>
            <person name="Bartels D."/>
            <person name="Bischoff N."/>
            <person name="Bott M."/>
            <person name="Burkovski A."/>
            <person name="Dusch N."/>
            <person name="Eggeling L."/>
            <person name="Eikmanns B.J."/>
            <person name="Gaigalat L."/>
            <person name="Goesmann A."/>
            <person name="Hartmann M."/>
            <person name="Huthmacher K."/>
            <person name="Kraemer R."/>
            <person name="Linke B."/>
            <person name="McHardy A.C."/>
            <person name="Meyer F."/>
            <person name="Moeckel B."/>
            <person name="Pfefferle W."/>
            <person name="Puehler A."/>
            <person name="Rey D.A."/>
            <person name="Rueckert C."/>
            <person name="Rupp O."/>
            <person name="Sahm H."/>
            <person name="Wendisch V.F."/>
            <person name="Wiegraebe I."/>
            <person name="Tauch A."/>
        </authorList>
    </citation>
    <scope>NUCLEOTIDE SEQUENCE [LARGE SCALE GENOMIC DNA]</scope>
    <source>
        <strain>ATCC 13032 / DSM 20300 / JCM 1318 / BCRC 11384 / CCUG 27702 / LMG 3730 / NBRC 12168 / NCIMB 10025 / NRRL B-2784 / 534</strain>
    </source>
</reference>
<name>DEOC_CORGL</name>
<keyword id="KW-0963">Cytoplasm</keyword>
<keyword id="KW-0456">Lyase</keyword>
<keyword id="KW-1185">Reference proteome</keyword>
<keyword id="KW-0704">Schiff base</keyword>
<sequence>MTISRSTMAQILDYTLLGPEVTNSELAAFIDSAIELGVGTICVPNSMVNLTAKAQEAGIRVATVAGFPHGKTPALVKAAEARLAVQSGASEVDVVLDIAVVKEGDANRLLQEIVAIREAVPSPVVLKFILETAVVSDEAIVTAVNALIAAGADFAKTSTGFHPAGGATVEAVRVMASASRGRVGIKAAGGVKTWEDAVAFVEAGATRIGTSNAGAILEGAPE</sequence>
<comment type="function">
    <text evidence="1">Catalyzes a reversible aldol reaction between acetaldehyde and D-glyceraldehyde 3-phosphate to generate 2-deoxy-D-ribose 5-phosphate.</text>
</comment>
<comment type="catalytic activity">
    <reaction evidence="1">
        <text>2-deoxy-D-ribose 5-phosphate = D-glyceraldehyde 3-phosphate + acetaldehyde</text>
        <dbReference type="Rhea" id="RHEA:12821"/>
        <dbReference type="ChEBI" id="CHEBI:15343"/>
        <dbReference type="ChEBI" id="CHEBI:59776"/>
        <dbReference type="ChEBI" id="CHEBI:62877"/>
        <dbReference type="EC" id="4.1.2.4"/>
    </reaction>
</comment>
<comment type="pathway">
    <text evidence="1">Carbohydrate degradation; 2-deoxy-D-ribose 1-phosphate degradation; D-glyceraldehyde 3-phosphate and acetaldehyde from 2-deoxy-alpha-D-ribose 1-phosphate: step 2/2.</text>
</comment>
<comment type="subcellular location">
    <subcellularLocation>
        <location evidence="1">Cytoplasm</location>
    </subcellularLocation>
</comment>
<comment type="similarity">
    <text evidence="1">Belongs to the DeoC/FbaB aldolase family. DeoC type 1 subfamily.</text>
</comment>
<organism>
    <name type="scientific">Corynebacterium glutamicum (strain ATCC 13032 / DSM 20300 / JCM 1318 / BCRC 11384 / CCUG 27702 / LMG 3730 / NBRC 12168 / NCIMB 10025 / NRRL B-2784 / 534)</name>
    <dbReference type="NCBI Taxonomy" id="196627"/>
    <lineage>
        <taxon>Bacteria</taxon>
        <taxon>Bacillati</taxon>
        <taxon>Actinomycetota</taxon>
        <taxon>Actinomycetes</taxon>
        <taxon>Mycobacteriales</taxon>
        <taxon>Corynebacteriaceae</taxon>
        <taxon>Corynebacterium</taxon>
    </lineage>
</organism>
<protein>
    <recommendedName>
        <fullName evidence="1">Deoxyribose-phosphate aldolase</fullName>
        <shortName evidence="1">DERA</shortName>
        <ecNumber evidence="1">4.1.2.4</ecNumber>
    </recommendedName>
    <alternativeName>
        <fullName evidence="1">2-deoxy-D-ribose 5-phosphate aldolase</fullName>
    </alternativeName>
    <alternativeName>
        <fullName evidence="1">Phosphodeoxyriboaldolase</fullName>
        <shortName evidence="1">Deoxyriboaldolase</shortName>
    </alternativeName>
</protein>
<proteinExistence type="inferred from homology"/>
<dbReference type="EC" id="4.1.2.4" evidence="1"/>
<dbReference type="EMBL" id="BA000036">
    <property type="protein sequence ID" value="BAB97776.1"/>
    <property type="molecule type" value="Genomic_DNA"/>
</dbReference>
<dbReference type="EMBL" id="BX927149">
    <property type="protein sequence ID" value="CAF19098.1"/>
    <property type="molecule type" value="Genomic_DNA"/>
</dbReference>
<dbReference type="RefSeq" id="NP_599631.1">
    <property type="nucleotide sequence ID" value="NC_003450.3"/>
</dbReference>
<dbReference type="SMR" id="Q8NTC4"/>
<dbReference type="STRING" id="196627.cg0458"/>
<dbReference type="KEGG" id="cgb:cg0458"/>
<dbReference type="KEGG" id="cgl:Cgl0383"/>
<dbReference type="PATRIC" id="fig|196627.13.peg.384"/>
<dbReference type="eggNOG" id="COG0274">
    <property type="taxonomic scope" value="Bacteria"/>
</dbReference>
<dbReference type="HOGENOM" id="CLU_053595_0_0_11"/>
<dbReference type="OrthoDB" id="6579831at2"/>
<dbReference type="BioCyc" id="CORYNE:G18NG-9940-MONOMER"/>
<dbReference type="UniPathway" id="UPA00002">
    <property type="reaction ID" value="UER00468"/>
</dbReference>
<dbReference type="Proteomes" id="UP000000582">
    <property type="component" value="Chromosome"/>
</dbReference>
<dbReference type="Proteomes" id="UP000001009">
    <property type="component" value="Chromosome"/>
</dbReference>
<dbReference type="GO" id="GO:0005737">
    <property type="term" value="C:cytoplasm"/>
    <property type="evidence" value="ECO:0007669"/>
    <property type="project" value="UniProtKB-SubCell"/>
</dbReference>
<dbReference type="GO" id="GO:0004139">
    <property type="term" value="F:deoxyribose-phosphate aldolase activity"/>
    <property type="evidence" value="ECO:0007669"/>
    <property type="project" value="UniProtKB-UniRule"/>
</dbReference>
<dbReference type="GO" id="GO:0006018">
    <property type="term" value="P:2-deoxyribose 1-phosphate catabolic process"/>
    <property type="evidence" value="ECO:0007669"/>
    <property type="project" value="UniProtKB-UniRule"/>
</dbReference>
<dbReference type="GO" id="GO:0016052">
    <property type="term" value="P:carbohydrate catabolic process"/>
    <property type="evidence" value="ECO:0007669"/>
    <property type="project" value="TreeGrafter"/>
</dbReference>
<dbReference type="GO" id="GO:0009264">
    <property type="term" value="P:deoxyribonucleotide catabolic process"/>
    <property type="evidence" value="ECO:0007669"/>
    <property type="project" value="InterPro"/>
</dbReference>
<dbReference type="CDD" id="cd00959">
    <property type="entry name" value="DeoC"/>
    <property type="match status" value="1"/>
</dbReference>
<dbReference type="Gene3D" id="3.20.20.70">
    <property type="entry name" value="Aldolase class I"/>
    <property type="match status" value="1"/>
</dbReference>
<dbReference type="HAMAP" id="MF_00114">
    <property type="entry name" value="DeoC_type1"/>
    <property type="match status" value="1"/>
</dbReference>
<dbReference type="InterPro" id="IPR013785">
    <property type="entry name" value="Aldolase_TIM"/>
</dbReference>
<dbReference type="InterPro" id="IPR011343">
    <property type="entry name" value="DeoC"/>
</dbReference>
<dbReference type="InterPro" id="IPR002915">
    <property type="entry name" value="DeoC/FbaB/LacD_aldolase"/>
</dbReference>
<dbReference type="InterPro" id="IPR028581">
    <property type="entry name" value="DeoC_typeI"/>
</dbReference>
<dbReference type="NCBIfam" id="TIGR00126">
    <property type="entry name" value="deoC"/>
    <property type="match status" value="1"/>
</dbReference>
<dbReference type="PANTHER" id="PTHR10889">
    <property type="entry name" value="DEOXYRIBOSE-PHOSPHATE ALDOLASE"/>
    <property type="match status" value="1"/>
</dbReference>
<dbReference type="PANTHER" id="PTHR10889:SF1">
    <property type="entry name" value="DEOXYRIBOSE-PHOSPHATE ALDOLASE"/>
    <property type="match status" value="1"/>
</dbReference>
<dbReference type="Pfam" id="PF01791">
    <property type="entry name" value="DeoC"/>
    <property type="match status" value="1"/>
</dbReference>
<dbReference type="PIRSF" id="PIRSF001357">
    <property type="entry name" value="DeoC"/>
    <property type="match status" value="1"/>
</dbReference>
<dbReference type="SMART" id="SM01133">
    <property type="entry name" value="DeoC"/>
    <property type="match status" value="1"/>
</dbReference>
<dbReference type="SUPFAM" id="SSF51569">
    <property type="entry name" value="Aldolase"/>
    <property type="match status" value="1"/>
</dbReference>
<feature type="chain" id="PRO_0000057230" description="Deoxyribose-phosphate aldolase">
    <location>
        <begin position="1"/>
        <end position="222"/>
    </location>
</feature>
<feature type="active site" description="Proton donor/acceptor" evidence="1">
    <location>
        <position position="93"/>
    </location>
</feature>
<feature type="active site" description="Schiff-base intermediate with acetaldehyde" evidence="1">
    <location>
        <position position="156"/>
    </location>
</feature>
<feature type="active site" description="Proton donor/acceptor" evidence="1">
    <location>
        <position position="186"/>
    </location>
</feature>
<gene>
    <name evidence="1" type="primary">deoC</name>
    <name type="ordered locus">Cgl0383</name>
    <name type="ordered locus">cg0458</name>
</gene>
<evidence type="ECO:0000255" key="1">
    <source>
        <dbReference type="HAMAP-Rule" id="MF_00114"/>
    </source>
</evidence>
<accession>Q8NTC4</accession>